<feature type="chain" id="PRO_0000097149" description="DNA repair protein RAD10">
    <location>
        <begin position="1"/>
        <end position="210"/>
    </location>
</feature>
<feature type="DNA-binding region" evidence="1">
    <location>
        <begin position="133"/>
        <end position="153"/>
    </location>
</feature>
<feature type="region of interest" description="Disordered" evidence="2">
    <location>
        <begin position="20"/>
        <end position="89"/>
    </location>
</feature>
<feature type="short sequence motif" description="Nuclear localization signal" evidence="1">
    <location>
        <begin position="17"/>
        <end position="23"/>
    </location>
</feature>
<feature type="compositionally biased region" description="Polar residues" evidence="2">
    <location>
        <begin position="26"/>
        <end position="64"/>
    </location>
</feature>
<feature type="compositionally biased region" description="Basic and acidic residues" evidence="2">
    <location>
        <begin position="65"/>
        <end position="80"/>
    </location>
</feature>
<gene>
    <name type="primary">RAD10</name>
    <name type="ordered locus">YML095C</name>
</gene>
<sequence>MNNTDPTSFESILAGVAKLRKEKSGADTTGSQSLEIDASKLQQQEPQTSRRINSNQVINAFNQQKPEEWTDSKATDDYNRKRPFRSTRPGKTVLVNTTQKENPLLNHLKSTNWRYVSSTGINMIYYDYLVRGRSVLFLTLTYHKLYVDYISRRMQPLSRNENNILIFIVDDNNSEDTLNDITKLCMFNGFTLLLAFNFEQAAKYIEYLNL</sequence>
<accession>P06838</accession>
<accession>D6W0J0</accession>
<protein>
    <recommendedName>
        <fullName>DNA repair protein RAD10</fullName>
    </recommendedName>
</protein>
<organism>
    <name type="scientific">Saccharomyces cerevisiae (strain ATCC 204508 / S288c)</name>
    <name type="common">Baker's yeast</name>
    <dbReference type="NCBI Taxonomy" id="559292"/>
    <lineage>
        <taxon>Eukaryota</taxon>
        <taxon>Fungi</taxon>
        <taxon>Dikarya</taxon>
        <taxon>Ascomycota</taxon>
        <taxon>Saccharomycotina</taxon>
        <taxon>Saccharomycetes</taxon>
        <taxon>Saccharomycetales</taxon>
        <taxon>Saccharomycetaceae</taxon>
        <taxon>Saccharomyces</taxon>
    </lineage>
</organism>
<keyword id="KW-0227">DNA damage</keyword>
<keyword id="KW-0234">DNA repair</keyword>
<keyword id="KW-0238">DNA-binding</keyword>
<keyword id="KW-0255">Endonuclease</keyword>
<keyword id="KW-0378">Hydrolase</keyword>
<keyword id="KW-0540">Nuclease</keyword>
<keyword id="KW-0539">Nucleus</keyword>
<keyword id="KW-1185">Reference proteome</keyword>
<dbReference type="EMBL" id="X02591">
    <property type="protein sequence ID" value="CAA26433.1"/>
    <property type="molecule type" value="Genomic_DNA"/>
</dbReference>
<dbReference type="EMBL" id="X05225">
    <property type="protein sequence ID" value="CAA28856.1"/>
    <property type="molecule type" value="Genomic_DNA"/>
</dbReference>
<dbReference type="EMBL" id="Z46660">
    <property type="protein sequence ID" value="CAA86642.1"/>
    <property type="molecule type" value="Genomic_DNA"/>
</dbReference>
<dbReference type="EMBL" id="BK006946">
    <property type="protein sequence ID" value="DAA09804.1"/>
    <property type="molecule type" value="Genomic_DNA"/>
</dbReference>
<dbReference type="PIR" id="A24576">
    <property type="entry name" value="A24576"/>
</dbReference>
<dbReference type="RefSeq" id="NP_013614.1">
    <property type="nucleotide sequence ID" value="NM_001182454.1"/>
</dbReference>
<dbReference type="SMR" id="P06838"/>
<dbReference type="BioGRID" id="35048">
    <property type="interactions" value="164"/>
</dbReference>
<dbReference type="ComplexPortal" id="CPX-1362">
    <property type="entry name" value="SLX4-RAD1-RAD10 endonuclease complex"/>
</dbReference>
<dbReference type="ComplexPortal" id="CPX-1363">
    <property type="entry name" value="SAW1-RAD1-RAD10 endonuclease complex"/>
</dbReference>
<dbReference type="ComplexPortal" id="CPX-1708">
    <property type="entry name" value="Nucleotide-excision repair factor 1 complex"/>
</dbReference>
<dbReference type="DIP" id="DIP-1545N"/>
<dbReference type="FunCoup" id="P06838">
    <property type="interactions" value="181"/>
</dbReference>
<dbReference type="IntAct" id="P06838">
    <property type="interactions" value="25"/>
</dbReference>
<dbReference type="MINT" id="P06838"/>
<dbReference type="STRING" id="4932.YML095C"/>
<dbReference type="iPTMnet" id="P06838"/>
<dbReference type="PaxDb" id="4932-YML095C"/>
<dbReference type="PeptideAtlas" id="P06838"/>
<dbReference type="EnsemblFungi" id="YML095C_mRNA">
    <property type="protein sequence ID" value="YML095C"/>
    <property type="gene ID" value="YML095C"/>
</dbReference>
<dbReference type="GeneID" id="854878"/>
<dbReference type="KEGG" id="sce:YML095C"/>
<dbReference type="AGR" id="SGD:S000004560"/>
<dbReference type="SGD" id="S000004560">
    <property type="gene designation" value="RAD10"/>
</dbReference>
<dbReference type="VEuPathDB" id="FungiDB:YML095C"/>
<dbReference type="eggNOG" id="KOG2841">
    <property type="taxonomic scope" value="Eukaryota"/>
</dbReference>
<dbReference type="GeneTree" id="ENSGT00390000011275"/>
<dbReference type="HOGENOM" id="CLU_1267070_0_0_1"/>
<dbReference type="InParanoid" id="P06838"/>
<dbReference type="OMA" id="ITKLCMF"/>
<dbReference type="OrthoDB" id="10262814at2759"/>
<dbReference type="BioCyc" id="YEAST:G3O-32680-MONOMER"/>
<dbReference type="BioGRID-ORCS" id="854878">
    <property type="hits" value="3 hits in 10 CRISPR screens"/>
</dbReference>
<dbReference type="PRO" id="PR:P06838"/>
<dbReference type="Proteomes" id="UP000002311">
    <property type="component" value="Chromosome XIII"/>
</dbReference>
<dbReference type="RNAct" id="P06838">
    <property type="molecule type" value="protein"/>
</dbReference>
<dbReference type="GO" id="GO:1905348">
    <property type="term" value="C:endonuclease complex"/>
    <property type="evidence" value="ECO:0000353"/>
    <property type="project" value="ComplexPortal"/>
</dbReference>
<dbReference type="GO" id="GO:0000110">
    <property type="term" value="C:nucleotide-excision repair factor 1 complex"/>
    <property type="evidence" value="ECO:0000353"/>
    <property type="project" value="ComplexPortal"/>
</dbReference>
<dbReference type="GO" id="GO:0005634">
    <property type="term" value="C:nucleus"/>
    <property type="evidence" value="ECO:0000314"/>
    <property type="project" value="SGD"/>
</dbReference>
<dbReference type="GO" id="GO:0003684">
    <property type="term" value="F:damaged DNA binding"/>
    <property type="evidence" value="ECO:0007669"/>
    <property type="project" value="InterPro"/>
</dbReference>
<dbReference type="GO" id="GO:0004519">
    <property type="term" value="F:endonuclease activity"/>
    <property type="evidence" value="ECO:0007669"/>
    <property type="project" value="UniProtKB-KW"/>
</dbReference>
<dbReference type="GO" id="GO:0003697">
    <property type="term" value="F:single-stranded DNA binding"/>
    <property type="evidence" value="ECO:0000314"/>
    <property type="project" value="SGD"/>
</dbReference>
<dbReference type="GO" id="GO:0006277">
    <property type="term" value="P:DNA amplification"/>
    <property type="evidence" value="ECO:0000315"/>
    <property type="project" value="SGD"/>
</dbReference>
<dbReference type="GO" id="GO:0000736">
    <property type="term" value="P:double-strand break repair via single-strand annealing, removal of nonhomologous ends"/>
    <property type="evidence" value="ECO:0000315"/>
    <property type="project" value="SGD"/>
</dbReference>
<dbReference type="GO" id="GO:0000710">
    <property type="term" value="P:meiotic mismatch repair"/>
    <property type="evidence" value="ECO:0000315"/>
    <property type="project" value="SGD"/>
</dbReference>
<dbReference type="GO" id="GO:0006312">
    <property type="term" value="P:mitotic recombination"/>
    <property type="evidence" value="ECO:0000315"/>
    <property type="project" value="SGD"/>
</dbReference>
<dbReference type="GO" id="GO:0006289">
    <property type="term" value="P:nucleotide-excision repair"/>
    <property type="evidence" value="ECO:0000314"/>
    <property type="project" value="SGD"/>
</dbReference>
<dbReference type="GO" id="GO:0000715">
    <property type="term" value="P:nucleotide-excision repair, DNA damage recognition"/>
    <property type="evidence" value="ECO:0000314"/>
    <property type="project" value="ComplexPortal"/>
</dbReference>
<dbReference type="GO" id="GO:0000735">
    <property type="term" value="P:removal of nonhomologous ends"/>
    <property type="evidence" value="ECO:0000315"/>
    <property type="project" value="SGD"/>
</dbReference>
<dbReference type="CDD" id="cd22325">
    <property type="entry name" value="ERCC1_C-like"/>
    <property type="match status" value="1"/>
</dbReference>
<dbReference type="FunFam" id="3.40.50.10130:FF:000015">
    <property type="entry name" value="SsDNA endonuclease"/>
    <property type="match status" value="1"/>
</dbReference>
<dbReference type="Gene3D" id="3.40.50.10130">
    <property type="match status" value="1"/>
</dbReference>
<dbReference type="InterPro" id="IPR047260">
    <property type="entry name" value="ERCC1-like_central_dom"/>
</dbReference>
<dbReference type="InterPro" id="IPR004579">
    <property type="entry name" value="ERCC1/RAD10/SWI10"/>
</dbReference>
<dbReference type="InterPro" id="IPR011335">
    <property type="entry name" value="Restrct_endonuc-II-like"/>
</dbReference>
<dbReference type="NCBIfam" id="TIGR00597">
    <property type="entry name" value="rad10"/>
    <property type="match status" value="1"/>
</dbReference>
<dbReference type="PANTHER" id="PTHR12749:SF0">
    <property type="entry name" value="DNA EXCISION REPAIR PROTEIN ERCC-1"/>
    <property type="match status" value="1"/>
</dbReference>
<dbReference type="PANTHER" id="PTHR12749">
    <property type="entry name" value="EXCISION REPAIR CROSS-COMPLEMENTING 1 ERCC1"/>
    <property type="match status" value="1"/>
</dbReference>
<dbReference type="Pfam" id="PF03834">
    <property type="entry name" value="Rad10"/>
    <property type="match status" value="1"/>
</dbReference>
<dbReference type="SUPFAM" id="SSF52980">
    <property type="entry name" value="Restriction endonuclease-like"/>
    <property type="match status" value="1"/>
</dbReference>
<comment type="function">
    <text evidence="4">Involved in nucleotide excision repair of DNA damaged with UV light, bulky adducts, or cross-linking agents. Along with RAD1 forms an endonuclease that specifically degrades single-stranded DNA.</text>
</comment>
<comment type="subunit">
    <text evidence="3 4 5">Component of the nucleotide excision repair factor 1 (NEF1) complex consisting of RAD1, RAD10 and RAD14. Interacts with SAW1.</text>
</comment>
<comment type="interaction">
    <interactant intactId="EBI-14637">
        <id>P06838</id>
    </interactant>
    <interactant intactId="EBI-14752">
        <id>P06777</id>
        <label>RAD1</label>
    </interactant>
    <organismsDiffer>false</organismsDiffer>
    <experiments>12</experiments>
</comment>
<comment type="subcellular location">
    <subcellularLocation>
        <location>Nucleus</location>
    </subcellularLocation>
</comment>
<comment type="similarity">
    <text evidence="6">Belongs to the ERCC1/RAD10/SWI10 family.</text>
</comment>
<proteinExistence type="evidence at protein level"/>
<name>RAD10_YEAST</name>
<evidence type="ECO:0000255" key="1"/>
<evidence type="ECO:0000256" key="2">
    <source>
        <dbReference type="SAM" id="MobiDB-lite"/>
    </source>
</evidence>
<evidence type="ECO:0000269" key="3">
    <source>
    </source>
</evidence>
<evidence type="ECO:0000269" key="4">
    <source>
    </source>
</evidence>
<evidence type="ECO:0000269" key="5">
    <source>
    </source>
</evidence>
<evidence type="ECO:0000305" key="6"/>
<reference key="1">
    <citation type="journal article" date="1985" name="EMBO J.">
        <title>Molecular cloning and characterization of the yeast RAD10 gene and expression of RAD10 protein in E. coli.</title>
        <authorList>
            <person name="Weiss W.A."/>
            <person name="Friedberg E.C."/>
        </authorList>
    </citation>
    <scope>NUCLEOTIDE SEQUENCE [GENOMIC DNA]</scope>
</reference>
<reference key="2">
    <citation type="journal article" date="1985" name="EMBO J.">
        <authorList>
            <person name="Weiss W.A."/>
            <person name="Friedberg E.C."/>
        </authorList>
    </citation>
    <scope>ERRATUM OF PUBMED:3896774</scope>
    <scope>SEQUENCE REVISION</scope>
</reference>
<reference key="3">
    <citation type="journal article" date="1985" name="EMBO J.">
        <title>Nucleotide sequence of the RAD10 gene of Saccharomyces cerevisiae.</title>
        <authorList>
            <person name="Reynolds P."/>
            <person name="Prakash L."/>
            <person name="Dumais D."/>
            <person name="Perozzi G."/>
            <person name="Prakash S."/>
        </authorList>
    </citation>
    <scope>NUCLEOTIDE SEQUENCE [GENOMIC DNA]</scope>
</reference>
<reference key="4">
    <citation type="journal article" date="1997" name="Nature">
        <title>The nucleotide sequence of Saccharomyces cerevisiae chromosome XIII.</title>
        <authorList>
            <person name="Bowman S."/>
            <person name="Churcher C.M."/>
            <person name="Badcock K."/>
            <person name="Brown D."/>
            <person name="Chillingworth T."/>
            <person name="Connor R."/>
            <person name="Dedman K."/>
            <person name="Devlin K."/>
            <person name="Gentles S."/>
            <person name="Hamlin N."/>
            <person name="Hunt S."/>
            <person name="Jagels K."/>
            <person name="Lye G."/>
            <person name="Moule S."/>
            <person name="Odell C."/>
            <person name="Pearson D."/>
            <person name="Rajandream M.A."/>
            <person name="Rice P."/>
            <person name="Skelton J."/>
            <person name="Walsh S.V."/>
            <person name="Whitehead S."/>
            <person name="Barrell B.G."/>
        </authorList>
    </citation>
    <scope>NUCLEOTIDE SEQUENCE [LARGE SCALE GENOMIC DNA]</scope>
    <source>
        <strain>ATCC 204508 / S288c</strain>
    </source>
</reference>
<reference key="5">
    <citation type="journal article" date="2014" name="G3 (Bethesda)">
        <title>The reference genome sequence of Saccharomyces cerevisiae: Then and now.</title>
        <authorList>
            <person name="Engel S.R."/>
            <person name="Dietrich F.S."/>
            <person name="Fisk D.G."/>
            <person name="Binkley G."/>
            <person name="Balakrishnan R."/>
            <person name="Costanzo M.C."/>
            <person name="Dwight S.S."/>
            <person name="Hitz B.C."/>
            <person name="Karra K."/>
            <person name="Nash R.S."/>
            <person name="Weng S."/>
            <person name="Wong E.D."/>
            <person name="Lloyd P."/>
            <person name="Skrzypek M.S."/>
            <person name="Miyasato S.R."/>
            <person name="Simison M."/>
            <person name="Cherry J.M."/>
        </authorList>
    </citation>
    <scope>GENOME REANNOTATION</scope>
    <source>
        <strain>ATCC 204508 / S288c</strain>
    </source>
</reference>
<reference key="6">
    <citation type="journal article" date="1993" name="Nature">
        <title>Yeast DNA repair and recombination proteins Rad1 and Rad10 constitute a single-stranded-DNA endonuclease.</title>
        <authorList>
            <person name="Tomkinson A.E."/>
            <person name="Bardwell A.J."/>
            <person name="Bardwell L."/>
            <person name="Tappe N.J."/>
            <person name="Friedberg E.C."/>
        </authorList>
    </citation>
    <scope>FUNCTION</scope>
    <scope>INTERACTION WITH RAD1</scope>
</reference>
<reference key="7">
    <citation type="journal article" date="1996" name="J. Biol. Chem.">
        <title>Nucleotide excision repair in yeast is mediated by sequential assembly of repair factors and not by a pre-assembled repairosome.</title>
        <authorList>
            <person name="Guzder S.N."/>
            <person name="Sung P."/>
            <person name="Prakash L."/>
            <person name="Prakash S."/>
        </authorList>
    </citation>
    <scope>IDENTIFICATION IN THE NEF1 COMPLEX</scope>
</reference>
<reference key="8">
    <citation type="journal article" date="2007" name="Genome Res.">
        <title>Examining protein protein interactions using endogenously tagged yeast arrays: the cross-and-capture system.</title>
        <authorList>
            <person name="Suter B."/>
            <person name="Fetchko M.J."/>
            <person name="Imhof R."/>
            <person name="Graham C.I."/>
            <person name="Stoffel-Studer I."/>
            <person name="Zbinden C."/>
            <person name="Raghavan M."/>
            <person name="Lopez L."/>
            <person name="Beneti L."/>
            <person name="Hort J."/>
            <person name="Fillingham J."/>
            <person name="Greenblatt J.F."/>
            <person name="Giaever G."/>
            <person name="Nislow C."/>
            <person name="Stagljar I."/>
        </authorList>
    </citation>
    <scope>INTERACTION WITH SAW1</scope>
</reference>